<organism>
    <name type="scientific">Bos taurus</name>
    <name type="common">Bovine</name>
    <dbReference type="NCBI Taxonomy" id="9913"/>
    <lineage>
        <taxon>Eukaryota</taxon>
        <taxon>Metazoa</taxon>
        <taxon>Chordata</taxon>
        <taxon>Craniata</taxon>
        <taxon>Vertebrata</taxon>
        <taxon>Euteleostomi</taxon>
        <taxon>Mammalia</taxon>
        <taxon>Eutheria</taxon>
        <taxon>Laurasiatheria</taxon>
        <taxon>Artiodactyla</taxon>
        <taxon>Ruminantia</taxon>
        <taxon>Pecora</taxon>
        <taxon>Bovidae</taxon>
        <taxon>Bovinae</taxon>
        <taxon>Bos</taxon>
    </lineage>
</organism>
<sequence length="597" mass="65162">LGASRLGPSPGCLAVASAAKLGSVYTEGGFVEGVNKKLSLFGDSIDIFKGIPFAAAPKALEKPERHPGWQGTLKAKSFKKRCLQATLTQDSTYGNEDCLYLNIWVPQGRKEVSHDLPVMIWIYGGAFLMGASQGANFLSNYLYDGEEIATRGNVIVVTFNYRVGPLGFLSTGDSNLPGNYGLWDQHMAIAWVKRNIEAFGGDPDNITLFGESAGGASVSLQTLSPYNKGLIKRAISQSGVGLCPWAIQQDPLFWAKRIAEKVGCPVDDTSKMAGCLKITDPRALTLAYKLPLGSTEYPKLHYLSFVPVIDGDFIPDDPVNLYANAADVDYIAGTNDMDGHLFVGMDVPAINSNKQDVTEEDFYKLVSGLTVTKGLRGANATYEVYTEPWAQDSSQETRKKTMVDLETDILFLIPTKIAVAQHKSHAKSANTYTYLFSQPSRMPIYPKWMGADHADDLQYVFGKPFATPLGYRAQDRTVSKAMIAYWTNFARTGDPNTGHSTVPANWDPYTLEDDNYLEINKQMDSNSMKLHLRTNYLQFWTQTYQALPTVTSAGASLLPPEDNSQASPVPPADNSGAPTEPSAGDSEVAQMPVVIGF</sequence>
<dbReference type="EC" id="3.1.1.13" evidence="3"/>
<dbReference type="EC" id="3.1.1.3" evidence="3"/>
<dbReference type="EC" id="3.1.1.6" evidence="6"/>
<dbReference type="EMBL" id="M28402">
    <property type="protein sequence ID" value="AAA56788.1"/>
    <property type="molecule type" value="mRNA"/>
</dbReference>
<dbReference type="PIR" id="A33668">
    <property type="entry name" value="A33668"/>
</dbReference>
<dbReference type="PDB" id="1AKN">
    <property type="method" value="X-ray"/>
    <property type="resolution" value="2.80 A"/>
    <property type="chains" value="A=19-597"/>
</dbReference>
<dbReference type="PDB" id="1AQL">
    <property type="method" value="X-ray"/>
    <property type="resolution" value="2.80 A"/>
    <property type="chains" value="A/B=19-550"/>
</dbReference>
<dbReference type="PDB" id="2BCE">
    <property type="method" value="X-ray"/>
    <property type="resolution" value="1.60 A"/>
    <property type="chains" value="A=19-597"/>
</dbReference>
<dbReference type="PDBsum" id="1AKN"/>
<dbReference type="PDBsum" id="1AQL"/>
<dbReference type="PDBsum" id="2BCE"/>
<dbReference type="SMR" id="P30122"/>
<dbReference type="FunCoup" id="P30122">
    <property type="interactions" value="41"/>
</dbReference>
<dbReference type="STRING" id="9913.ENSBTAP00000032584"/>
<dbReference type="BindingDB" id="P30122"/>
<dbReference type="ChEMBL" id="CHEMBL2988"/>
<dbReference type="SwissLipids" id="SLP:000000735"/>
<dbReference type="ESTHER" id="bovin-balip">
    <property type="family name" value="Cholesterol_esterase"/>
</dbReference>
<dbReference type="MEROPS" id="S09.985"/>
<dbReference type="GlyCosmos" id="P30122">
    <property type="glycosylation" value="2 sites, No reported glycans"/>
</dbReference>
<dbReference type="GlyGen" id="P30122">
    <property type="glycosylation" value="2 sites"/>
</dbReference>
<dbReference type="PaxDb" id="9913-ENSBTAP00000032584"/>
<dbReference type="eggNOG" id="KOG1516">
    <property type="taxonomic scope" value="Eukaryota"/>
</dbReference>
<dbReference type="InParanoid" id="P30122"/>
<dbReference type="OrthoDB" id="19653at2759"/>
<dbReference type="EvolutionaryTrace" id="P30122"/>
<dbReference type="Proteomes" id="UP000009136">
    <property type="component" value="Unplaced"/>
</dbReference>
<dbReference type="GO" id="GO:0005737">
    <property type="term" value="C:cytoplasm"/>
    <property type="evidence" value="ECO:0000250"/>
    <property type="project" value="UniProtKB"/>
</dbReference>
<dbReference type="GO" id="GO:0005576">
    <property type="term" value="C:extracellular region"/>
    <property type="evidence" value="ECO:0007669"/>
    <property type="project" value="UniProtKB-SubCell"/>
</dbReference>
<dbReference type="GO" id="GO:0016020">
    <property type="term" value="C:membrane"/>
    <property type="evidence" value="ECO:0007669"/>
    <property type="project" value="GOC"/>
</dbReference>
<dbReference type="GO" id="GO:0008126">
    <property type="term" value="F:acetylesterase activity"/>
    <property type="evidence" value="ECO:0007669"/>
    <property type="project" value="UniProtKB-EC"/>
</dbReference>
<dbReference type="GO" id="GO:0050253">
    <property type="term" value="F:retinyl-palmitate esterase activity"/>
    <property type="evidence" value="ECO:0000318"/>
    <property type="project" value="GO_Central"/>
</dbReference>
<dbReference type="GO" id="GO:0004771">
    <property type="term" value="F:sterol ester esterase activity"/>
    <property type="evidence" value="ECO:0000318"/>
    <property type="project" value="GO_Central"/>
</dbReference>
<dbReference type="GO" id="GO:0004806">
    <property type="term" value="F:triacylglycerol lipase activity"/>
    <property type="evidence" value="ECO:0000318"/>
    <property type="project" value="GO_Central"/>
</dbReference>
<dbReference type="GO" id="GO:0046514">
    <property type="term" value="P:ceramide catabolic process"/>
    <property type="evidence" value="ECO:0000318"/>
    <property type="project" value="GO_Central"/>
</dbReference>
<dbReference type="GO" id="GO:0030157">
    <property type="term" value="P:pancreatic juice secretion"/>
    <property type="evidence" value="ECO:0000318"/>
    <property type="project" value="GO_Central"/>
</dbReference>
<dbReference type="CDD" id="cd00312">
    <property type="entry name" value="Esterase_lipase"/>
    <property type="match status" value="1"/>
</dbReference>
<dbReference type="FunFam" id="3.40.50.1820:FF:000100">
    <property type="entry name" value="Carboxylic ester hydrolase"/>
    <property type="match status" value="1"/>
</dbReference>
<dbReference type="Gene3D" id="3.40.50.1820">
    <property type="entry name" value="alpha/beta hydrolase"/>
    <property type="match status" value="1"/>
</dbReference>
<dbReference type="InterPro" id="IPR029058">
    <property type="entry name" value="AB_hydrolase_fold"/>
</dbReference>
<dbReference type="InterPro" id="IPR002018">
    <property type="entry name" value="CarbesteraseB"/>
</dbReference>
<dbReference type="InterPro" id="IPR019826">
    <property type="entry name" value="Carboxylesterase_B_AS"/>
</dbReference>
<dbReference type="InterPro" id="IPR019819">
    <property type="entry name" value="Carboxylesterase_B_CS"/>
</dbReference>
<dbReference type="InterPro" id="IPR051093">
    <property type="entry name" value="Neuroligin/BSAL"/>
</dbReference>
<dbReference type="PANTHER" id="PTHR43903">
    <property type="entry name" value="NEUROLIGIN"/>
    <property type="match status" value="1"/>
</dbReference>
<dbReference type="Pfam" id="PF00135">
    <property type="entry name" value="COesterase"/>
    <property type="match status" value="1"/>
</dbReference>
<dbReference type="SUPFAM" id="SSF53474">
    <property type="entry name" value="alpha/beta-Hydrolases"/>
    <property type="match status" value="1"/>
</dbReference>
<dbReference type="PROSITE" id="PS00122">
    <property type="entry name" value="CARBOXYLESTERASE_B_1"/>
    <property type="match status" value="1"/>
</dbReference>
<dbReference type="PROSITE" id="PS00941">
    <property type="entry name" value="CARBOXYLESTERASE_B_2"/>
    <property type="match status" value="1"/>
</dbReference>
<gene>
    <name type="primary">CEL</name>
</gene>
<protein>
    <recommendedName>
        <fullName>Bile salt-activated lipase</fullName>
        <shortName>BAL</shortName>
        <ecNumber evidence="3">3.1.1.13</ecNumber>
        <ecNumber evidence="3">3.1.1.3</ecNumber>
        <ecNumber evidence="6">3.1.1.6</ecNumber>
    </recommendedName>
    <alternativeName>
        <fullName>Bile salt-stimulated lipase</fullName>
        <shortName>BSSL</shortName>
    </alternativeName>
    <alternativeName>
        <fullName>Carboxyl ester lipase</fullName>
    </alternativeName>
    <alternativeName>
        <fullName>Cholesterol esterase</fullName>
    </alternativeName>
    <alternativeName>
        <fullName>Pancreatic lysophospholipase</fullName>
    </alternativeName>
    <alternativeName>
        <fullName>Sterol esterase</fullName>
    </alternativeName>
</protein>
<proteinExistence type="evidence at protein level"/>
<keyword id="KW-0002">3D-structure</keyword>
<keyword id="KW-0903">Direct protein sequencing</keyword>
<keyword id="KW-1015">Disulfide bond</keyword>
<keyword id="KW-0325">Glycoprotein</keyword>
<keyword id="KW-0378">Hydrolase</keyword>
<keyword id="KW-0442">Lipid degradation</keyword>
<keyword id="KW-0443">Lipid metabolism</keyword>
<keyword id="KW-1185">Reference proteome</keyword>
<keyword id="KW-0964">Secreted</keyword>
<keyword id="KW-0719">Serine esterase</keyword>
<keyword id="KW-0732">Signal</keyword>
<comment type="function">
    <text evidence="3 4 6">Catalyzes the hydrolysis of a wide range of substrates including cholesteryl esters, phospholipids, lysophospholipids, di- and tri-acylglycerols, and fatty acid esters of hydroxy fatty acids (FAHFA) (PubMed:10220579). Preferentially hydrolyzes FAHFAs with the ester bond further away from the carboxylate. Unsaturated FAHFAs are hydrolyzed more quickly than saturated FAHFAs (By similarity). Has an essential role in the complete digestion of dietary lipids and their intestinal absorption, along with the absorption of fat-soluble vitamins (By similarity).</text>
</comment>
<comment type="catalytic activity">
    <reaction evidence="3">
        <text>a triacylglycerol + H2O = a diacylglycerol + a fatty acid + H(+)</text>
        <dbReference type="Rhea" id="RHEA:12044"/>
        <dbReference type="ChEBI" id="CHEBI:15377"/>
        <dbReference type="ChEBI" id="CHEBI:15378"/>
        <dbReference type="ChEBI" id="CHEBI:17855"/>
        <dbReference type="ChEBI" id="CHEBI:18035"/>
        <dbReference type="ChEBI" id="CHEBI:28868"/>
        <dbReference type="EC" id="3.1.1.3"/>
    </reaction>
    <physiologicalReaction direction="left-to-right" evidence="3">
        <dbReference type="Rhea" id="RHEA:12045"/>
    </physiologicalReaction>
</comment>
<comment type="catalytic activity">
    <reaction evidence="6">
        <text>1,2,3-tri-(9Z-octadecenoyl)-glycerol + H2O = di-(9Z)-octadecenoylglycerol + (9Z)-octadecenoate + H(+)</text>
        <dbReference type="Rhea" id="RHEA:38575"/>
        <dbReference type="ChEBI" id="CHEBI:15377"/>
        <dbReference type="ChEBI" id="CHEBI:15378"/>
        <dbReference type="ChEBI" id="CHEBI:30823"/>
        <dbReference type="ChEBI" id="CHEBI:53753"/>
        <dbReference type="ChEBI" id="CHEBI:75945"/>
    </reaction>
    <physiologicalReaction direction="left-to-right" evidence="8">
        <dbReference type="Rhea" id="RHEA:38576"/>
    </physiologicalReaction>
</comment>
<comment type="catalytic activity">
    <reaction evidence="3">
        <text>1,2,3-trioctanoylglycerol + H2O = dioctanoylglycerol + octanoate + H(+)</text>
        <dbReference type="Rhea" id="RHEA:47864"/>
        <dbReference type="ChEBI" id="CHEBI:15377"/>
        <dbReference type="ChEBI" id="CHEBI:15378"/>
        <dbReference type="ChEBI" id="CHEBI:25646"/>
        <dbReference type="ChEBI" id="CHEBI:76978"/>
        <dbReference type="ChEBI" id="CHEBI:88066"/>
    </reaction>
    <physiologicalReaction direction="left-to-right" evidence="3">
        <dbReference type="Rhea" id="RHEA:47865"/>
    </physiologicalReaction>
</comment>
<comment type="catalytic activity">
    <reaction evidence="3">
        <text>a sterol ester + H2O = a sterol + a fatty acid + H(+)</text>
        <dbReference type="Rhea" id="RHEA:10100"/>
        <dbReference type="ChEBI" id="CHEBI:15377"/>
        <dbReference type="ChEBI" id="CHEBI:15378"/>
        <dbReference type="ChEBI" id="CHEBI:15889"/>
        <dbReference type="ChEBI" id="CHEBI:28868"/>
        <dbReference type="ChEBI" id="CHEBI:35915"/>
        <dbReference type="EC" id="3.1.1.13"/>
    </reaction>
    <physiologicalReaction direction="left-to-right" evidence="3">
        <dbReference type="Rhea" id="RHEA:10101"/>
    </physiologicalReaction>
</comment>
<comment type="catalytic activity">
    <reaction evidence="2">
        <text>cholesteryl (9Z-octadecenoate) + H2O = cholesterol + (9Z)-octadecenoate + H(+)</text>
        <dbReference type="Rhea" id="RHEA:33875"/>
        <dbReference type="ChEBI" id="CHEBI:15377"/>
        <dbReference type="ChEBI" id="CHEBI:15378"/>
        <dbReference type="ChEBI" id="CHEBI:16113"/>
        <dbReference type="ChEBI" id="CHEBI:30823"/>
        <dbReference type="ChEBI" id="CHEBI:46898"/>
    </reaction>
    <physiologicalReaction direction="left-to-right" evidence="2">
        <dbReference type="Rhea" id="RHEA:33876"/>
    </physiologicalReaction>
</comment>
<comment type="catalytic activity">
    <reaction evidence="6">
        <text>an acetyl ester + H2O = an aliphatic alcohol + acetate + H(+)</text>
        <dbReference type="Rhea" id="RHEA:12957"/>
        <dbReference type="ChEBI" id="CHEBI:2571"/>
        <dbReference type="ChEBI" id="CHEBI:15377"/>
        <dbReference type="ChEBI" id="CHEBI:15378"/>
        <dbReference type="ChEBI" id="CHEBI:30089"/>
        <dbReference type="ChEBI" id="CHEBI:47622"/>
        <dbReference type="EC" id="3.1.1.6"/>
    </reaction>
    <physiologicalReaction direction="left-to-right" evidence="8">
        <dbReference type="Rhea" id="RHEA:12958"/>
    </physiologicalReaction>
</comment>
<comment type="catalytic activity">
    <reaction evidence="2">
        <text>a butanoate ester + H2O = an aliphatic alcohol + butanoate + H(+)</text>
        <dbReference type="Rhea" id="RHEA:47348"/>
        <dbReference type="ChEBI" id="CHEBI:2571"/>
        <dbReference type="ChEBI" id="CHEBI:15377"/>
        <dbReference type="ChEBI" id="CHEBI:15378"/>
        <dbReference type="ChEBI" id="CHEBI:17968"/>
        <dbReference type="ChEBI" id="CHEBI:50477"/>
    </reaction>
    <physiologicalReaction direction="left-to-right" evidence="2">
        <dbReference type="Rhea" id="RHEA:47349"/>
    </physiologicalReaction>
</comment>
<comment type="catalytic activity">
    <reaction evidence="3">
        <text>9-hexadecanoyloxy-octadecanoate + H2O = 9-hydroxy-octadecanoate + hexadecanoate + H(+)</text>
        <dbReference type="Rhea" id="RHEA:52052"/>
        <dbReference type="ChEBI" id="CHEBI:7896"/>
        <dbReference type="ChEBI" id="CHEBI:15377"/>
        <dbReference type="ChEBI" id="CHEBI:15378"/>
        <dbReference type="ChEBI" id="CHEBI:83670"/>
        <dbReference type="ChEBI" id="CHEBI:136286"/>
    </reaction>
    <physiologicalReaction direction="left-to-right" evidence="3">
        <dbReference type="Rhea" id="RHEA:52053"/>
    </physiologicalReaction>
</comment>
<comment type="catalytic activity">
    <reaction evidence="3">
        <text>9-(9Z-octadecenoyloxy)-octadecanoate + H2O = 9-hydroxy-octadecanoate + (9Z)-octadecenoate + H(+)</text>
        <dbReference type="Rhea" id="RHEA:52048"/>
        <dbReference type="ChEBI" id="CHEBI:15377"/>
        <dbReference type="ChEBI" id="CHEBI:15378"/>
        <dbReference type="ChEBI" id="CHEBI:30823"/>
        <dbReference type="ChEBI" id="CHEBI:136282"/>
        <dbReference type="ChEBI" id="CHEBI:136286"/>
    </reaction>
    <physiologicalReaction direction="left-to-right" evidence="3">
        <dbReference type="Rhea" id="RHEA:52049"/>
    </physiologicalReaction>
</comment>
<comment type="catalytic activity">
    <reaction evidence="2">
        <text>1-hexadecanoyl-sn-glycero-3-phosphocholine + H2O = sn-glycerol 3-phosphocholine + hexadecanoate + H(+)</text>
        <dbReference type="Rhea" id="RHEA:40435"/>
        <dbReference type="ChEBI" id="CHEBI:7896"/>
        <dbReference type="ChEBI" id="CHEBI:15377"/>
        <dbReference type="ChEBI" id="CHEBI:15378"/>
        <dbReference type="ChEBI" id="CHEBI:16870"/>
        <dbReference type="ChEBI" id="CHEBI:72998"/>
    </reaction>
    <physiologicalReaction direction="left-to-right" evidence="2">
        <dbReference type="Rhea" id="RHEA:40436"/>
    </physiologicalReaction>
</comment>
<comment type="catalytic activity">
    <reaction evidence="4">
        <text>12-hexadecanoyloxy-octadecanoate + H2O = 12-hydroxyoctadecanoate + hexadecanoate + H(+)</text>
        <dbReference type="Rhea" id="RHEA:52056"/>
        <dbReference type="ChEBI" id="CHEBI:7896"/>
        <dbReference type="ChEBI" id="CHEBI:15377"/>
        <dbReference type="ChEBI" id="CHEBI:15378"/>
        <dbReference type="ChEBI" id="CHEBI:83677"/>
        <dbReference type="ChEBI" id="CHEBI:84201"/>
    </reaction>
    <physiologicalReaction direction="left-to-right" evidence="4">
        <dbReference type="Rhea" id="RHEA:52057"/>
    </physiologicalReaction>
</comment>
<comment type="catalytic activity">
    <reaction evidence="4">
        <text>12-(9Z-octadecenoyloxy)-octadecanoate + H2O = 12-hydroxyoctadecanoate + (9Z)-octadecenoate + H(+)</text>
        <dbReference type="Rhea" id="RHEA:52060"/>
        <dbReference type="ChEBI" id="CHEBI:15377"/>
        <dbReference type="ChEBI" id="CHEBI:15378"/>
        <dbReference type="ChEBI" id="CHEBI:30823"/>
        <dbReference type="ChEBI" id="CHEBI:84201"/>
        <dbReference type="ChEBI" id="CHEBI:136302"/>
    </reaction>
    <physiologicalReaction direction="left-to-right" evidence="4">
        <dbReference type="Rhea" id="RHEA:52061"/>
    </physiologicalReaction>
</comment>
<comment type="catalytic activity">
    <reaction evidence="4">
        <text>13-(9Z-octadecenoyloxy)-octadecanoate + H2O = 13-hydroxy-octadecanoate + (9Z)-octadecenoate + H(+)</text>
        <dbReference type="Rhea" id="RHEA:52064"/>
        <dbReference type="ChEBI" id="CHEBI:15377"/>
        <dbReference type="ChEBI" id="CHEBI:15378"/>
        <dbReference type="ChEBI" id="CHEBI:30823"/>
        <dbReference type="ChEBI" id="CHEBI:136303"/>
        <dbReference type="ChEBI" id="CHEBI:136304"/>
    </reaction>
    <physiologicalReaction direction="left-to-right" evidence="4">
        <dbReference type="Rhea" id="RHEA:52065"/>
    </physiologicalReaction>
</comment>
<comment type="catalytic activity">
    <reaction evidence="4">
        <text>9-(9Z-hexadecenoyloxy)-octadecanoate + H2O = (9Z)-hexadecenoate + 9-hydroxy-octadecanoate + H(+)</text>
        <dbReference type="Rhea" id="RHEA:52068"/>
        <dbReference type="ChEBI" id="CHEBI:15377"/>
        <dbReference type="ChEBI" id="CHEBI:15378"/>
        <dbReference type="ChEBI" id="CHEBI:32372"/>
        <dbReference type="ChEBI" id="CHEBI:136286"/>
        <dbReference type="ChEBI" id="CHEBI:136309"/>
    </reaction>
    <physiologicalReaction direction="left-to-right" evidence="4">
        <dbReference type="Rhea" id="RHEA:52069"/>
    </physiologicalReaction>
</comment>
<comment type="catalytic activity">
    <reaction evidence="4">
        <text>12-(9Z-hexadecenoyloxy)-octadecanoate + H2O = 12-hydroxyoctadecanoate + (9Z)-hexadecenoate + H(+)</text>
        <dbReference type="Rhea" id="RHEA:52072"/>
        <dbReference type="ChEBI" id="CHEBI:15377"/>
        <dbReference type="ChEBI" id="CHEBI:15378"/>
        <dbReference type="ChEBI" id="CHEBI:32372"/>
        <dbReference type="ChEBI" id="CHEBI:84201"/>
        <dbReference type="ChEBI" id="CHEBI:136312"/>
    </reaction>
    <physiologicalReaction direction="left-to-right" evidence="4">
        <dbReference type="Rhea" id="RHEA:52073"/>
    </physiologicalReaction>
</comment>
<comment type="catalytic activity">
    <reaction evidence="4">
        <text>13-(9Z-hexadecenoyloxy)-octadecanoate + H2O = 13-hydroxy-octadecanoate + (9Z)-hexadecenoate + H(+)</text>
        <dbReference type="Rhea" id="RHEA:52076"/>
        <dbReference type="ChEBI" id="CHEBI:15377"/>
        <dbReference type="ChEBI" id="CHEBI:15378"/>
        <dbReference type="ChEBI" id="CHEBI:32372"/>
        <dbReference type="ChEBI" id="CHEBI:136304"/>
        <dbReference type="ChEBI" id="CHEBI:136315"/>
    </reaction>
    <physiologicalReaction direction="left-to-right" evidence="4">
        <dbReference type="Rhea" id="RHEA:52077"/>
    </physiologicalReaction>
</comment>
<comment type="catalytic activity">
    <reaction evidence="4">
        <text>12-octadecanoyloxy-octadecanoate + H2O = 12-hydroxyoctadecanoate + octadecanoate + H(+)</text>
        <dbReference type="Rhea" id="RHEA:52080"/>
        <dbReference type="ChEBI" id="CHEBI:15377"/>
        <dbReference type="ChEBI" id="CHEBI:15378"/>
        <dbReference type="ChEBI" id="CHEBI:25629"/>
        <dbReference type="ChEBI" id="CHEBI:84201"/>
        <dbReference type="ChEBI" id="CHEBI:136330"/>
    </reaction>
    <physiologicalReaction direction="left-to-right" evidence="4">
        <dbReference type="Rhea" id="RHEA:52081"/>
    </physiologicalReaction>
</comment>
<comment type="catalytic activity">
    <reaction evidence="4">
        <text>13-octadecanoyloxy-octadecanoate + H2O = 13-hydroxy-octadecanoate + octadecanoate + H(+)</text>
        <dbReference type="Rhea" id="RHEA:52084"/>
        <dbReference type="ChEBI" id="CHEBI:15377"/>
        <dbReference type="ChEBI" id="CHEBI:15378"/>
        <dbReference type="ChEBI" id="CHEBI:25629"/>
        <dbReference type="ChEBI" id="CHEBI:136304"/>
        <dbReference type="ChEBI" id="CHEBI:136335"/>
    </reaction>
    <physiologicalReaction direction="left-to-right" evidence="4">
        <dbReference type="Rhea" id="RHEA:52085"/>
    </physiologicalReaction>
</comment>
<comment type="catalytic activity">
    <reaction evidence="4">
        <text>5-(9Z-hexadecenoyloxy)-octadecanoate + H2O = 5-hydroxy-octadecanoate + (9Z)-hexadecenoate + H(+)</text>
        <dbReference type="Rhea" id="RHEA:52092"/>
        <dbReference type="ChEBI" id="CHEBI:15377"/>
        <dbReference type="ChEBI" id="CHEBI:15378"/>
        <dbReference type="ChEBI" id="CHEBI:32372"/>
        <dbReference type="ChEBI" id="CHEBI:136369"/>
        <dbReference type="ChEBI" id="CHEBI:136370"/>
    </reaction>
    <physiologicalReaction direction="left-to-right" evidence="4">
        <dbReference type="Rhea" id="RHEA:52093"/>
    </physiologicalReaction>
</comment>
<comment type="catalytic activity">
    <reaction evidence="4">
        <text>9-octadecanoyloxy-octadecanoate + H2O = 9-hydroxy-octadecanoate + octadecanoate + H(+)</text>
        <dbReference type="Rhea" id="RHEA:52096"/>
        <dbReference type="ChEBI" id="CHEBI:15377"/>
        <dbReference type="ChEBI" id="CHEBI:15378"/>
        <dbReference type="ChEBI" id="CHEBI:25629"/>
        <dbReference type="ChEBI" id="CHEBI:136286"/>
        <dbReference type="ChEBI" id="CHEBI:136373"/>
    </reaction>
    <physiologicalReaction direction="left-to-right" evidence="4">
        <dbReference type="Rhea" id="RHEA:52097"/>
    </physiologicalReaction>
</comment>
<comment type="activity regulation">
    <text evidence="6">Activated by bile salts such as sodium taurocholate.</text>
</comment>
<comment type="subunit">
    <text evidence="1">Interacts with CLC.</text>
</comment>
<comment type="subcellular location">
    <subcellularLocation>
        <location evidence="3">Secreted</location>
    </subcellularLocation>
</comment>
<comment type="similarity">
    <text evidence="7">Belongs to the type-B carboxylesterase/lipase family.</text>
</comment>
<accession>P30122</accession>
<name>CEL_BOVIN</name>
<evidence type="ECO:0000250" key="1"/>
<evidence type="ECO:0000250" key="2">
    <source>
        <dbReference type="UniProtKB" id="P07882"/>
    </source>
</evidence>
<evidence type="ECO:0000250" key="3">
    <source>
        <dbReference type="UniProtKB" id="P19835"/>
    </source>
</evidence>
<evidence type="ECO:0000250" key="4">
    <source>
        <dbReference type="UniProtKB" id="Q64285"/>
    </source>
</evidence>
<evidence type="ECO:0000256" key="5">
    <source>
        <dbReference type="SAM" id="MobiDB-lite"/>
    </source>
</evidence>
<evidence type="ECO:0000269" key="6">
    <source>
    </source>
</evidence>
<evidence type="ECO:0000305" key="7"/>
<evidence type="ECO:0000305" key="8">
    <source>
    </source>
</evidence>
<evidence type="ECO:0007829" key="9">
    <source>
        <dbReference type="PDB" id="1AKN"/>
    </source>
</evidence>
<evidence type="ECO:0007829" key="10">
    <source>
        <dbReference type="PDB" id="1AQL"/>
    </source>
</evidence>
<evidence type="ECO:0007829" key="11">
    <source>
        <dbReference type="PDB" id="2BCE"/>
    </source>
</evidence>
<reference key="1">
    <citation type="journal article" date="1989" name="Biochem. Biophys. Res. Commun.">
        <title>Cloning of the bovine pancreatic cholesterol esterase/lysophospholipase.</title>
        <authorList>
            <person name="Kyger E.M."/>
            <person name="Wiegand R.C."/>
            <person name="Lange L.G."/>
        </authorList>
    </citation>
    <scope>NUCLEOTIDE SEQUENCE [MRNA]</scope>
</reference>
<reference key="2">
    <citation type="journal article" date="1999" name="J. Biochem.">
        <title>Purification and characterization of bovine pancreatic bile salt-activated lipase.</title>
        <authorList>
            <person name="Tanaka H."/>
            <person name="Mierau I."/>
            <person name="Ito F."/>
        </authorList>
    </citation>
    <scope>PROTEIN SEQUENCE OF 19-40</scope>
    <scope>FUNCTION</scope>
    <scope>CATALYTIC ACTIVITY</scope>
    <scope>ACTIVITY REGULATION</scope>
    <source>
        <tissue>Pancreas</tissue>
    </source>
</reference>
<reference key="3">
    <citation type="journal article" date="1997" name="Structure">
        <title>The crystal structure of bovine bile salt activated lipase: insights into the bile salt activation mechanism.</title>
        <authorList>
            <person name="Wang X."/>
            <person name="Wang C.S."/>
            <person name="Tang J."/>
            <person name="Dyda F."/>
            <person name="Zhang X.C."/>
        </authorList>
    </citation>
    <scope>X-RAY CRYSTALLOGRAPHY (2.8 ANGSTROMS) OF 19-565</scope>
    <scope>SEQUENCE REVISION TO 45</scope>
</reference>
<reference key="4">
    <citation type="journal article" date="1998" name="Biochemistry">
        <title>Structure of bovine pancreatic cholesterol esterase at 1.6 A: novel structural features involved in lipase activation.</title>
        <authorList>
            <person name="Chen J.C.-H."/>
            <person name="Miercke L.J.W."/>
            <person name="Krucinski J."/>
            <person name="Starr J.R."/>
            <person name="Saenz G."/>
            <person name="Wang X."/>
            <person name="Spilburg C.A."/>
            <person name="Lange L.G."/>
            <person name="Ellsworth J.L."/>
            <person name="Stroud R.M."/>
        </authorList>
    </citation>
    <scope>X-RAY CRYSTALLOGRAPHY (1.6 ANGSTROMS) OF 19-597</scope>
</reference>
<feature type="signal peptide" evidence="6">
    <location>
        <begin position="1" status="less than"/>
        <end position="18"/>
    </location>
</feature>
<feature type="chain" id="PRO_0000008630" description="Bile salt-activated lipase">
    <location>
        <begin position="19"/>
        <end position="597"/>
    </location>
</feature>
<feature type="region of interest" description="Disordered" evidence="5">
    <location>
        <begin position="553"/>
        <end position="591"/>
    </location>
</feature>
<feature type="active site" description="Acyl-ester intermediate">
    <location>
        <position position="212"/>
    </location>
</feature>
<feature type="active site" description="Charge relay system">
    <location>
        <position position="338"/>
    </location>
</feature>
<feature type="active site" description="Charge relay system">
    <location>
        <position position="453"/>
    </location>
</feature>
<feature type="glycosylation site" description="N-linked (GlcNAc...) asparagine">
    <location>
        <position position="205"/>
    </location>
</feature>
<feature type="glycosylation site" description="N-linked (GlcNAc...) asparagine">
    <location>
        <position position="379"/>
    </location>
</feature>
<feature type="disulfide bond">
    <location>
        <begin position="82"/>
        <end position="98"/>
    </location>
</feature>
<feature type="disulfide bond">
    <location>
        <begin position="264"/>
        <end position="275"/>
    </location>
</feature>
<feature type="sequence conflict" description="In Ref. 2; AA sequence." evidence="7" ref="2">
    <original>F</original>
    <variation>P</variation>
    <location>
        <position position="30"/>
    </location>
</feature>
<feature type="sequence conflict" description="In Ref. 1; AAA56788." evidence="7" ref="1">
    <original>I</original>
    <variation>V</variation>
    <location>
        <position position="45"/>
    </location>
</feature>
<feature type="non-terminal residue">
    <location>
        <position position="1"/>
    </location>
</feature>
<feature type="strand" evidence="11">
    <location>
        <begin position="23"/>
        <end position="26"/>
    </location>
</feature>
<feature type="strand" evidence="11">
    <location>
        <begin position="29"/>
        <end position="32"/>
    </location>
</feature>
<feature type="strand" evidence="11">
    <location>
        <begin position="34"/>
        <end position="37"/>
    </location>
</feature>
<feature type="strand" evidence="10">
    <location>
        <begin position="40"/>
        <end position="42"/>
    </location>
</feature>
<feature type="strand" evidence="11">
    <location>
        <begin position="44"/>
        <end position="55"/>
    </location>
</feature>
<feature type="strand" evidence="11">
    <location>
        <begin position="70"/>
        <end position="74"/>
    </location>
</feature>
<feature type="strand" evidence="11">
    <location>
        <begin position="83"/>
        <end position="86"/>
    </location>
</feature>
<feature type="strand" evidence="9">
    <location>
        <begin position="87"/>
        <end position="89"/>
    </location>
</feature>
<feature type="strand" evidence="11">
    <location>
        <begin position="90"/>
        <end position="94"/>
    </location>
</feature>
<feature type="strand" evidence="11">
    <location>
        <begin position="100"/>
        <end position="107"/>
    </location>
</feature>
<feature type="strand" evidence="11">
    <location>
        <begin position="109"/>
        <end position="111"/>
    </location>
</feature>
<feature type="strand" evidence="11">
    <location>
        <begin position="115"/>
        <end position="121"/>
    </location>
</feature>
<feature type="strand" evidence="11">
    <location>
        <begin position="126"/>
        <end position="129"/>
    </location>
</feature>
<feature type="turn" evidence="9">
    <location>
        <begin position="132"/>
        <end position="134"/>
    </location>
</feature>
<feature type="helix" evidence="11">
    <location>
        <begin position="141"/>
        <end position="143"/>
    </location>
</feature>
<feature type="helix" evidence="11">
    <location>
        <begin position="146"/>
        <end position="152"/>
    </location>
</feature>
<feature type="strand" evidence="11">
    <location>
        <begin position="155"/>
        <end position="159"/>
    </location>
</feature>
<feature type="helix" evidence="11">
    <location>
        <begin position="164"/>
        <end position="168"/>
    </location>
</feature>
<feature type="helix" evidence="11">
    <location>
        <begin position="180"/>
        <end position="195"/>
    </location>
</feature>
<feature type="helix" evidence="11">
    <location>
        <begin position="196"/>
        <end position="199"/>
    </location>
</feature>
<feature type="strand" evidence="11">
    <location>
        <begin position="201"/>
        <end position="211"/>
    </location>
</feature>
<feature type="helix" evidence="11">
    <location>
        <begin position="213"/>
        <end position="223"/>
    </location>
</feature>
<feature type="helix" evidence="11">
    <location>
        <begin position="225"/>
        <end position="227"/>
    </location>
</feature>
<feature type="turn" evidence="11">
    <location>
        <begin position="228"/>
        <end position="230"/>
    </location>
</feature>
<feature type="strand" evidence="11">
    <location>
        <begin position="232"/>
        <end position="238"/>
    </location>
</feature>
<feature type="helix" evidence="11">
    <location>
        <begin position="244"/>
        <end position="246"/>
    </location>
</feature>
<feature type="helix" evidence="11">
    <location>
        <begin position="251"/>
        <end position="261"/>
    </location>
</feature>
<feature type="helix" evidence="11">
    <location>
        <begin position="269"/>
        <end position="278"/>
    </location>
</feature>
<feature type="helix" evidence="11">
    <location>
        <begin position="281"/>
        <end position="286"/>
    </location>
</feature>
<feature type="helix" evidence="11">
    <location>
        <begin position="299"/>
        <end position="302"/>
    </location>
</feature>
<feature type="strand" evidence="11">
    <location>
        <begin position="311"/>
        <end position="314"/>
    </location>
</feature>
<feature type="helix" evidence="11">
    <location>
        <begin position="318"/>
        <end position="320"/>
    </location>
</feature>
<feature type="helix" evidence="11">
    <location>
        <begin position="322"/>
        <end position="325"/>
    </location>
</feature>
<feature type="strand" evidence="11">
    <location>
        <begin position="328"/>
        <end position="335"/>
    </location>
</feature>
<feature type="turn" evidence="9">
    <location>
        <begin position="336"/>
        <end position="339"/>
    </location>
</feature>
<feature type="helix" evidence="11">
    <location>
        <begin position="340"/>
        <end position="346"/>
    </location>
</feature>
<feature type="helix" evidence="11">
    <location>
        <begin position="348"/>
        <end position="350"/>
    </location>
</feature>
<feature type="strand" evidence="11">
    <location>
        <begin position="353"/>
        <end position="355"/>
    </location>
</feature>
<feature type="helix" evidence="11">
    <location>
        <begin position="359"/>
        <end position="369"/>
    </location>
</feature>
<feature type="helix" evidence="11">
    <location>
        <begin position="370"/>
        <end position="373"/>
    </location>
</feature>
<feature type="helix" evidence="11">
    <location>
        <begin position="374"/>
        <end position="386"/>
    </location>
</feature>
<feature type="helix" evidence="11">
    <location>
        <begin position="387"/>
        <end position="389"/>
    </location>
</feature>
<feature type="helix" evidence="11">
    <location>
        <begin position="395"/>
        <end position="410"/>
    </location>
</feature>
<feature type="helix" evidence="11">
    <location>
        <begin position="412"/>
        <end position="425"/>
    </location>
</feature>
<feature type="strand" evidence="11">
    <location>
        <begin position="431"/>
        <end position="436"/>
    </location>
</feature>
<feature type="strand" evidence="11">
    <location>
        <begin position="443"/>
        <end position="445"/>
    </location>
</feature>
<feature type="turn" evidence="11">
    <location>
        <begin position="453"/>
        <end position="456"/>
    </location>
</feature>
<feature type="helix" evidence="11">
    <location>
        <begin position="457"/>
        <end position="460"/>
    </location>
</feature>
<feature type="helix" evidence="11">
    <location>
        <begin position="463"/>
        <end position="466"/>
    </location>
</feature>
<feature type="helix" evidence="11">
    <location>
        <begin position="468"/>
        <end position="470"/>
    </location>
</feature>
<feature type="helix" evidence="11">
    <location>
        <begin position="473"/>
        <end position="492"/>
    </location>
</feature>
<feature type="strand" evidence="11">
    <location>
        <begin position="497"/>
        <end position="500"/>
    </location>
</feature>
<feature type="turn" evidence="11">
    <location>
        <begin position="511"/>
        <end position="513"/>
    </location>
</feature>
<feature type="strand" evidence="11">
    <location>
        <begin position="515"/>
        <end position="521"/>
    </location>
</feature>
<feature type="helix" evidence="9">
    <location>
        <begin position="525"/>
        <end position="527"/>
    </location>
</feature>
<feature type="strand" evidence="11">
    <location>
        <begin position="528"/>
        <end position="530"/>
    </location>
</feature>
<feature type="helix" evidence="11">
    <location>
        <begin position="534"/>
        <end position="541"/>
    </location>
</feature>
<feature type="helix" evidence="11">
    <location>
        <begin position="543"/>
        <end position="546"/>
    </location>
</feature>
<feature type="strand" evidence="9">
    <location>
        <begin position="557"/>
        <end position="559"/>
    </location>
</feature>
<feature type="strand" evidence="11">
    <location>
        <begin position="593"/>
        <end position="595"/>
    </location>
</feature>